<reference key="1">
    <citation type="journal article" date="2007" name="BMC Microbiol.">
        <title>Subtle genetic changes enhance virulence of methicillin resistant and sensitive Staphylococcus aureus.</title>
        <authorList>
            <person name="Highlander S.K."/>
            <person name="Hulten K.G."/>
            <person name="Qin X."/>
            <person name="Jiang H."/>
            <person name="Yerrapragada S."/>
            <person name="Mason E.O. Jr."/>
            <person name="Shang Y."/>
            <person name="Williams T.M."/>
            <person name="Fortunov R.M."/>
            <person name="Liu Y."/>
            <person name="Igboeli O."/>
            <person name="Petrosino J."/>
            <person name="Tirumalai M."/>
            <person name="Uzman A."/>
            <person name="Fox G.E."/>
            <person name="Cardenas A.M."/>
            <person name="Muzny D.M."/>
            <person name="Hemphill L."/>
            <person name="Ding Y."/>
            <person name="Dugan S."/>
            <person name="Blyth P.R."/>
            <person name="Buhay C.J."/>
            <person name="Dinh H.H."/>
            <person name="Hawes A.C."/>
            <person name="Holder M."/>
            <person name="Kovar C.L."/>
            <person name="Lee S.L."/>
            <person name="Liu W."/>
            <person name="Nazareth L.V."/>
            <person name="Wang Q."/>
            <person name="Zhou J."/>
            <person name="Kaplan S.L."/>
            <person name="Weinstock G.M."/>
        </authorList>
    </citation>
    <scope>NUCLEOTIDE SEQUENCE [LARGE SCALE GENOMIC DNA]</scope>
    <source>
        <strain>USA300 / TCH1516</strain>
    </source>
</reference>
<evidence type="ECO:0000255" key="1">
    <source>
        <dbReference type="HAMAP-Rule" id="MF_01124"/>
    </source>
</evidence>
<evidence type="ECO:0000256" key="2">
    <source>
        <dbReference type="SAM" id="MobiDB-lite"/>
    </source>
</evidence>
<dbReference type="EMBL" id="CP000730">
    <property type="protein sequence ID" value="ABX28977.1"/>
    <property type="molecule type" value="Genomic_DNA"/>
</dbReference>
<dbReference type="RefSeq" id="WP_001217730.1">
    <property type="nucleotide sequence ID" value="NC_010079.1"/>
</dbReference>
<dbReference type="SMR" id="A8Z0A3"/>
<dbReference type="KEGG" id="sax:USA300HOU_0956"/>
<dbReference type="HOGENOM" id="CLU_071496_2_1_9"/>
<dbReference type="GO" id="GO:0030674">
    <property type="term" value="F:protein-macromolecule adaptor activity"/>
    <property type="evidence" value="ECO:0007669"/>
    <property type="project" value="UniProtKB-UniRule"/>
</dbReference>
<dbReference type="Gene3D" id="3.30.70.1950">
    <property type="match status" value="1"/>
</dbReference>
<dbReference type="HAMAP" id="MF_01124">
    <property type="entry name" value="MecA"/>
    <property type="match status" value="1"/>
</dbReference>
<dbReference type="InterPro" id="IPR038471">
    <property type="entry name" value="MecA_C_sf"/>
</dbReference>
<dbReference type="InterPro" id="IPR008681">
    <property type="entry name" value="Neg-reg_MecA"/>
</dbReference>
<dbReference type="NCBIfam" id="NF002642">
    <property type="entry name" value="PRK02315.1-3"/>
    <property type="match status" value="1"/>
</dbReference>
<dbReference type="NCBIfam" id="NF002644">
    <property type="entry name" value="PRK02315.1-5"/>
    <property type="match status" value="1"/>
</dbReference>
<dbReference type="PANTHER" id="PTHR39161">
    <property type="entry name" value="ADAPTER PROTEIN MECA"/>
    <property type="match status" value="1"/>
</dbReference>
<dbReference type="PANTHER" id="PTHR39161:SF1">
    <property type="entry name" value="ADAPTER PROTEIN MECA 1"/>
    <property type="match status" value="1"/>
</dbReference>
<dbReference type="Pfam" id="PF05389">
    <property type="entry name" value="MecA"/>
    <property type="match status" value="1"/>
</dbReference>
<dbReference type="PIRSF" id="PIRSF029008">
    <property type="entry name" value="MecA"/>
    <property type="match status" value="1"/>
</dbReference>
<proteinExistence type="inferred from homology"/>
<gene>
    <name evidence="1" type="primary">mecA</name>
    <name type="ordered locus">USA300HOU_0956</name>
</gene>
<comment type="function">
    <text evidence="1">Enables the recognition and targeting of unfolded and aggregated proteins to the ClpC protease or to other proteins involved in proteolysis.</text>
</comment>
<comment type="subunit">
    <text evidence="1">Homodimer.</text>
</comment>
<comment type="domain">
    <text>The N-terminal domain probably binds unfolded/aggregated proteins; the C-terminal domain interacts with ClpC.</text>
</comment>
<comment type="similarity">
    <text evidence="1">Belongs to the MecA family.</text>
</comment>
<accession>A8Z0A3</accession>
<name>MECA_STAAT</name>
<organism>
    <name type="scientific">Staphylococcus aureus (strain USA300 / TCH1516)</name>
    <dbReference type="NCBI Taxonomy" id="451516"/>
    <lineage>
        <taxon>Bacteria</taxon>
        <taxon>Bacillati</taxon>
        <taxon>Bacillota</taxon>
        <taxon>Bacilli</taxon>
        <taxon>Bacillales</taxon>
        <taxon>Staphylococcaceae</taxon>
        <taxon>Staphylococcus</taxon>
    </lineage>
</organism>
<protein>
    <recommendedName>
        <fullName evidence="1">Adapter protein MecA</fullName>
    </recommendedName>
</protein>
<sequence>MRIERVDDTTVKLFITYSDIEARGFSREDLWTNRKRGEEFFWSMMDEINEEEDFVVEGPLWIQVHAFEKGVEVTISKSKNEDMMNMSDDDATDQFDEQVQELLAQTLEGEDQLEELFEQRTKEKEAQGSKRQKSSARKNTRTIIVKFNDLEDVINYAYHSNPITTEFEDLLYMVDGTYYYAVYFDSHVDQEVINDSYSQLLEFAYPTDRTEVYLNDYAKIIMSHNVTAQVRRYFPETTE</sequence>
<feature type="chain" id="PRO_1000085011" description="Adapter protein MecA">
    <location>
        <begin position="1"/>
        <end position="239"/>
    </location>
</feature>
<feature type="region of interest" description="Disordered" evidence="2">
    <location>
        <begin position="118"/>
        <end position="137"/>
    </location>
</feature>
<feature type="compositionally biased region" description="Basic and acidic residues" evidence="2">
    <location>
        <begin position="118"/>
        <end position="128"/>
    </location>
</feature>